<keyword id="KW-0012">Acyltransferase</keyword>
<keyword id="KW-0325">Glycoprotein</keyword>
<keyword id="KW-0449">Lipoprotein</keyword>
<keyword id="KW-0472">Membrane</keyword>
<keyword id="KW-0564">Palmitate</keyword>
<keyword id="KW-1185">Reference proteome</keyword>
<keyword id="KW-0808">Transferase</keyword>
<keyword id="KW-0812">Transmembrane</keyword>
<keyword id="KW-1133">Transmembrane helix</keyword>
<reference evidence="5" key="1">
    <citation type="journal article" date="2002" name="Nature">
        <title>Sequence and analysis of chromosome 2 of Dictyostelium discoideum.</title>
        <authorList>
            <person name="Gloeckner G."/>
            <person name="Eichinger L."/>
            <person name="Szafranski K."/>
            <person name="Pachebat J.A."/>
            <person name="Bankier A.T."/>
            <person name="Dear P.H."/>
            <person name="Lehmann R."/>
            <person name="Baumgart C."/>
            <person name="Parra G."/>
            <person name="Abril J.F."/>
            <person name="Guigo R."/>
            <person name="Kumpf K."/>
            <person name="Tunggal B."/>
            <person name="Cox E.C."/>
            <person name="Quail M.A."/>
            <person name="Platzer M."/>
            <person name="Rosenthal A."/>
            <person name="Noegel A.A."/>
        </authorList>
    </citation>
    <scope>NUCLEOTIDE SEQUENCE [LARGE SCALE GENOMIC DNA]</scope>
    <source>
        <strain>AX4</strain>
    </source>
</reference>
<reference evidence="5 6" key="2">
    <citation type="journal article" date="2005" name="Nature">
        <title>The genome of the social amoeba Dictyostelium discoideum.</title>
        <authorList>
            <person name="Eichinger L."/>
            <person name="Pachebat J.A."/>
            <person name="Gloeckner G."/>
            <person name="Rajandream M.A."/>
            <person name="Sucgang R."/>
            <person name="Berriman M."/>
            <person name="Song J."/>
            <person name="Olsen R."/>
            <person name="Szafranski K."/>
            <person name="Xu Q."/>
            <person name="Tunggal B."/>
            <person name="Kummerfeld S."/>
            <person name="Madera M."/>
            <person name="Konfortov B.A."/>
            <person name="Rivero F."/>
            <person name="Bankier A.T."/>
            <person name="Lehmann R."/>
            <person name="Hamlin N."/>
            <person name="Davies R."/>
            <person name="Gaudet P."/>
            <person name="Fey P."/>
            <person name="Pilcher K."/>
            <person name="Chen G."/>
            <person name="Saunders D."/>
            <person name="Sodergren E.J."/>
            <person name="Davis P."/>
            <person name="Kerhornou A."/>
            <person name="Nie X."/>
            <person name="Hall N."/>
            <person name="Anjard C."/>
            <person name="Hemphill L."/>
            <person name="Bason N."/>
            <person name="Farbrother P."/>
            <person name="Desany B."/>
            <person name="Just E."/>
            <person name="Morio T."/>
            <person name="Rost R."/>
            <person name="Churcher C.M."/>
            <person name="Cooper J."/>
            <person name="Haydock S."/>
            <person name="van Driessche N."/>
            <person name="Cronin A."/>
            <person name="Goodhead I."/>
            <person name="Muzny D.M."/>
            <person name="Mourier T."/>
            <person name="Pain A."/>
            <person name="Lu M."/>
            <person name="Harper D."/>
            <person name="Lindsay R."/>
            <person name="Hauser H."/>
            <person name="James K.D."/>
            <person name="Quiles M."/>
            <person name="Madan Babu M."/>
            <person name="Saito T."/>
            <person name="Buchrieser C."/>
            <person name="Wardroper A."/>
            <person name="Felder M."/>
            <person name="Thangavelu M."/>
            <person name="Johnson D."/>
            <person name="Knights A."/>
            <person name="Loulseged H."/>
            <person name="Mungall K.L."/>
            <person name="Oliver K."/>
            <person name="Price C."/>
            <person name="Quail M.A."/>
            <person name="Urushihara H."/>
            <person name="Hernandez J."/>
            <person name="Rabbinowitsch E."/>
            <person name="Steffen D."/>
            <person name="Sanders M."/>
            <person name="Ma J."/>
            <person name="Kohara Y."/>
            <person name="Sharp S."/>
            <person name="Simmonds M.N."/>
            <person name="Spiegler S."/>
            <person name="Tivey A."/>
            <person name="Sugano S."/>
            <person name="White B."/>
            <person name="Walker D."/>
            <person name="Woodward J.R."/>
            <person name="Winckler T."/>
            <person name="Tanaka Y."/>
            <person name="Shaulsky G."/>
            <person name="Schleicher M."/>
            <person name="Weinstock G.M."/>
            <person name="Rosenthal A."/>
            <person name="Cox E.C."/>
            <person name="Chisholm R.L."/>
            <person name="Gibbs R.A."/>
            <person name="Loomis W.F."/>
            <person name="Platzer M."/>
            <person name="Kay R.R."/>
            <person name="Williams J.G."/>
            <person name="Dear P.H."/>
            <person name="Noegel A.A."/>
            <person name="Barrell B.G."/>
            <person name="Kuspa A."/>
        </authorList>
    </citation>
    <scope>NUCLEOTIDE SEQUENCE [LARGE SCALE GENOMIC DNA]</scope>
    <source>
        <strain evidence="6">AX4</strain>
    </source>
</reference>
<reference key="3">
    <citation type="journal article" date="2004" name="Nucleic Acids Res.">
        <title>Analyses of cDNAs from growth and slug stages of Dictyostelium discoideum.</title>
        <authorList>
            <person name="Urushihara H."/>
            <person name="Morio T."/>
            <person name="Saito T."/>
            <person name="Kohara Y."/>
            <person name="Koriki E."/>
            <person name="Ochiai H."/>
            <person name="Maeda M."/>
            <person name="Williams J.G."/>
            <person name="Takeuchi I."/>
            <person name="Tanaka Y."/>
        </authorList>
    </citation>
    <scope>NUCLEOTIDE SEQUENCE [LARGE SCALE MRNA] OF 84-169 AND 378-446</scope>
    <source>
        <strain>AX4</strain>
    </source>
</reference>
<name>ZDHC2_DICDI</name>
<comment type="catalytic activity">
    <reaction>
        <text>L-cysteinyl-[protein] + hexadecanoyl-CoA = S-hexadecanoyl-L-cysteinyl-[protein] + CoA</text>
        <dbReference type="Rhea" id="RHEA:36683"/>
        <dbReference type="Rhea" id="RHEA-COMP:10131"/>
        <dbReference type="Rhea" id="RHEA-COMP:11032"/>
        <dbReference type="ChEBI" id="CHEBI:29950"/>
        <dbReference type="ChEBI" id="CHEBI:57287"/>
        <dbReference type="ChEBI" id="CHEBI:57379"/>
        <dbReference type="ChEBI" id="CHEBI:74151"/>
        <dbReference type="EC" id="2.3.1.225"/>
    </reaction>
</comment>
<comment type="subcellular location">
    <subcellularLocation>
        <location evidence="2">Membrane</location>
        <topology evidence="2">Multi-pass membrane protein</topology>
    </subcellularLocation>
</comment>
<comment type="domain">
    <text evidence="1">The DHHC domain is required for palmitoyltransferase activity.</text>
</comment>
<comment type="similarity">
    <text evidence="2">Belongs to the DHHC palmitoyltransferase family.</text>
</comment>
<protein>
    <recommendedName>
        <fullName>Putative ZDHHC-type palmitoyltransferase 2</fullName>
        <ecNumber>2.3.1.225</ecNumber>
    </recommendedName>
    <alternativeName>
        <fullName>Zinc finger DHHC domain-containing protein 2</fullName>
    </alternativeName>
</protein>
<feature type="chain" id="PRO_0000259606" description="Putative ZDHHC-type palmitoyltransferase 2">
    <location>
        <begin position="1"/>
        <end position="446"/>
    </location>
</feature>
<feature type="transmembrane region" description="Helical" evidence="2">
    <location>
        <begin position="178"/>
        <end position="198"/>
    </location>
</feature>
<feature type="transmembrane region" description="Helical" evidence="2">
    <location>
        <begin position="210"/>
        <end position="230"/>
    </location>
</feature>
<feature type="transmembrane region" description="Helical" evidence="2">
    <location>
        <begin position="305"/>
        <end position="325"/>
    </location>
</feature>
<feature type="transmembrane region" description="Helical" evidence="2">
    <location>
        <begin position="349"/>
        <end position="369"/>
    </location>
</feature>
<feature type="transmembrane region" description="Helical" evidence="2">
    <location>
        <begin position="410"/>
        <end position="430"/>
    </location>
</feature>
<feature type="domain" description="DHHC" evidence="3">
    <location>
        <begin position="261"/>
        <end position="311"/>
    </location>
</feature>
<feature type="region of interest" description="Disordered" evidence="4">
    <location>
        <begin position="1"/>
        <end position="33"/>
    </location>
</feature>
<feature type="region of interest" description="Disordered" evidence="4">
    <location>
        <begin position="56"/>
        <end position="83"/>
    </location>
</feature>
<feature type="compositionally biased region" description="Low complexity" evidence="4">
    <location>
        <begin position="56"/>
        <end position="81"/>
    </location>
</feature>
<feature type="glycosylation site" description="N-linked (GlcNAc...) asparagine" evidence="2">
    <location>
        <position position="5"/>
    </location>
</feature>
<feature type="glycosylation site" description="N-linked (GlcNAc...) asparagine" evidence="2">
    <location>
        <position position="8"/>
    </location>
</feature>
<feature type="glycosylation site" description="N-linked (GlcNAc...) asparagine" evidence="2">
    <location>
        <position position="14"/>
    </location>
</feature>
<feature type="glycosylation site" description="N-linked (GlcNAc...) asparagine" evidence="2">
    <location>
        <position position="21"/>
    </location>
</feature>
<feature type="glycosylation site" description="N-linked (GlcNAc...) asparagine" evidence="2">
    <location>
        <position position="141"/>
    </location>
</feature>
<feature type="glycosylation site" description="N-linked (GlcNAc...) asparagine" evidence="2">
    <location>
        <position position="145"/>
    </location>
</feature>
<feature type="glycosylation site" description="N-linked (GlcNAc...) asparagine" evidence="2">
    <location>
        <position position="159"/>
    </location>
</feature>
<feature type="glycosylation site" description="N-linked (GlcNAc...) asparagine" evidence="2">
    <location>
        <position position="165"/>
    </location>
</feature>
<sequence>MNLYNNSNSSGSSNSSSSSNNKTNIDYNDINNNDILTPKGYHTSIYIDDNDLNNNQIINKNNNNNHNRNNNNNNNNNNNHNNPKKMVINLNPSGIFIPLMNDFDDDDDDEQESLIKNNKITIPTINSQIAIPILNNNDNNNNSNNKTEQTTTTTTIIKNTTIFNNKTISFGRIGFRSIVIFLILVPYIYILNFAIFPWTVNYETERKGKIHSFISMALVIQMLCNYYLCSTTDPGSFKDTISPSYYLLHPISSTDSNDHKKWCNKCNHQKPERAHHCRYCNRCVLRMDHHCQWLQNCIGLFNQKYFVLFLFYTSISIIYFFTLLIKRSIELVTKYTMEKTLPSFDLLHLFLLGILIIILIIAGISIMALLWTQIALISKGLTTIEHEDKKRKYQQPNYLNLYKKYDKGSIISNFSIVFGNLSFLWLLPTIPNNLKITSKKGDIFIV</sequence>
<evidence type="ECO:0000250" key="1">
    <source>
        <dbReference type="UniProtKB" id="Q9NYG2"/>
    </source>
</evidence>
<evidence type="ECO:0000255" key="2"/>
<evidence type="ECO:0000255" key="3">
    <source>
        <dbReference type="PROSITE-ProRule" id="PRU00067"/>
    </source>
</evidence>
<evidence type="ECO:0000256" key="4">
    <source>
        <dbReference type="SAM" id="MobiDB-lite"/>
    </source>
</evidence>
<evidence type="ECO:0000305" key="5"/>
<evidence type="ECO:0000312" key="6">
    <source>
        <dbReference type="EMBL" id="EAL70262.1"/>
    </source>
</evidence>
<organism>
    <name type="scientific">Dictyostelium discoideum</name>
    <name type="common">Social amoeba</name>
    <dbReference type="NCBI Taxonomy" id="44689"/>
    <lineage>
        <taxon>Eukaryota</taxon>
        <taxon>Amoebozoa</taxon>
        <taxon>Evosea</taxon>
        <taxon>Eumycetozoa</taxon>
        <taxon>Dictyostelia</taxon>
        <taxon>Dictyosteliales</taxon>
        <taxon>Dictyosteliaceae</taxon>
        <taxon>Dictyostelium</taxon>
    </lineage>
</organism>
<dbReference type="EC" id="2.3.1.225"/>
<dbReference type="EMBL" id="AAFI02000012">
    <property type="protein sequence ID" value="EAL70262.1"/>
    <property type="molecule type" value="Genomic_DNA"/>
</dbReference>
<dbReference type="EMBL" id="AU053196">
    <property type="status" value="NOT_ANNOTATED_CDS"/>
    <property type="molecule type" value="mRNA"/>
</dbReference>
<dbReference type="EMBL" id="AU053698">
    <property type="status" value="NOT_ANNOTATED_CDS"/>
    <property type="molecule type" value="mRNA"/>
</dbReference>
<dbReference type="EMBL" id="AU060371">
    <property type="status" value="NOT_ANNOTATED_CDS"/>
    <property type="molecule type" value="mRNA"/>
</dbReference>
<dbReference type="EMBL" id="AU062170">
    <property type="status" value="NOT_ANNOTATED_CDS"/>
    <property type="molecule type" value="mRNA"/>
</dbReference>
<dbReference type="RefSeq" id="XP_643941.1">
    <property type="nucleotide sequence ID" value="XM_638849.1"/>
</dbReference>
<dbReference type="SMR" id="Q86A83"/>
<dbReference type="FunCoup" id="Q86A83">
    <property type="interactions" value="9"/>
</dbReference>
<dbReference type="STRING" id="44689.Q86A83"/>
<dbReference type="GlyGen" id="Q86A83">
    <property type="glycosylation" value="8 sites"/>
</dbReference>
<dbReference type="PaxDb" id="44689-DDB0203296"/>
<dbReference type="EnsemblProtists" id="EAL70262">
    <property type="protein sequence ID" value="EAL70262"/>
    <property type="gene ID" value="DDB_G0274739"/>
</dbReference>
<dbReference type="GeneID" id="8619369"/>
<dbReference type="KEGG" id="ddi:DDB_G0274739"/>
<dbReference type="dictyBase" id="DDB_G0274739"/>
<dbReference type="VEuPathDB" id="AmoebaDB:DDB_G0274739"/>
<dbReference type="eggNOG" id="KOG1315">
    <property type="taxonomic scope" value="Eukaryota"/>
</dbReference>
<dbReference type="HOGENOM" id="CLU_614567_0_0_1"/>
<dbReference type="InParanoid" id="Q86A83"/>
<dbReference type="OMA" id="WENFKMI"/>
<dbReference type="PhylomeDB" id="Q86A83"/>
<dbReference type="PRO" id="PR:Q86A83"/>
<dbReference type="Proteomes" id="UP000002195">
    <property type="component" value="Chromosome 2"/>
</dbReference>
<dbReference type="GO" id="GO:0005783">
    <property type="term" value="C:endoplasmic reticulum"/>
    <property type="evidence" value="ECO:0000318"/>
    <property type="project" value="GO_Central"/>
</dbReference>
<dbReference type="GO" id="GO:0005794">
    <property type="term" value="C:Golgi apparatus"/>
    <property type="evidence" value="ECO:0000318"/>
    <property type="project" value="GO_Central"/>
</dbReference>
<dbReference type="GO" id="GO:0016020">
    <property type="term" value="C:membrane"/>
    <property type="evidence" value="ECO:0007669"/>
    <property type="project" value="UniProtKB-SubCell"/>
</dbReference>
<dbReference type="GO" id="GO:0019706">
    <property type="term" value="F:protein-cysteine S-palmitoyltransferase activity"/>
    <property type="evidence" value="ECO:0000318"/>
    <property type="project" value="GO_Central"/>
</dbReference>
<dbReference type="GO" id="GO:0006612">
    <property type="term" value="P:protein targeting to membrane"/>
    <property type="evidence" value="ECO:0000318"/>
    <property type="project" value="GO_Central"/>
</dbReference>
<dbReference type="InterPro" id="IPR001594">
    <property type="entry name" value="Palmitoyltrfase_DHHC"/>
</dbReference>
<dbReference type="InterPro" id="IPR039859">
    <property type="entry name" value="PFA4/ZDH16/20/ERF2-like"/>
</dbReference>
<dbReference type="PANTHER" id="PTHR12246">
    <property type="entry name" value="PALMITOYLTRANSFERASE ZDHHC16"/>
    <property type="match status" value="1"/>
</dbReference>
<dbReference type="Pfam" id="PF01529">
    <property type="entry name" value="DHHC"/>
    <property type="match status" value="1"/>
</dbReference>
<dbReference type="PROSITE" id="PS50216">
    <property type="entry name" value="DHHC"/>
    <property type="match status" value="1"/>
</dbReference>
<proteinExistence type="evidence at transcript level"/>
<gene>
    <name type="ORF">DDB_G0274739</name>
</gene>
<accession>Q86A83</accession>
<accession>Q555W9</accession>